<keyword id="KW-0238">DNA-binding</keyword>
<keyword id="KW-0423">Lactose metabolism</keyword>
<keyword id="KW-0678">Repressor</keyword>
<keyword id="KW-0804">Transcription</keyword>
<keyword id="KW-0805">Transcription regulation</keyword>
<sequence>MNKYDRLDEITKLVNKRGSVRTNEIVEDLNVSDMTVRRDLAELEEKGVLTKIHGGARSNSAFQYKEMSHQEKHTRFIEEKRFIAKNAVDLIEDGDTIFLGPGTTVQKLAEEINHYSLTIITNCLPVFNILIKKQTLHFRVYLLGGEMRDLTEAFVGEMTNQLLSQLRFSKMFFSSNGVKDGLAMTSSIEEAYTQQIALSHSLEKYLLIDSSKIGKDDFSSFCELRELNAVLTDNNDLEKKEKIESYVEVIS</sequence>
<dbReference type="EMBL" id="AE015929">
    <property type="protein sequence ID" value="AAO05429.1"/>
    <property type="molecule type" value="Genomic_DNA"/>
</dbReference>
<dbReference type="RefSeq" id="NP_765343.1">
    <property type="nucleotide sequence ID" value="NC_004461.1"/>
</dbReference>
<dbReference type="RefSeq" id="WP_001829761.1">
    <property type="nucleotide sequence ID" value="NZ_WBME01000007.1"/>
</dbReference>
<dbReference type="SMR" id="Q8CRJ1"/>
<dbReference type="KEGG" id="sep:SE_1788"/>
<dbReference type="PATRIC" id="fig|176280.10.peg.1745"/>
<dbReference type="eggNOG" id="COG1349">
    <property type="taxonomic scope" value="Bacteria"/>
</dbReference>
<dbReference type="HOGENOM" id="CLU_060699_1_0_9"/>
<dbReference type="OrthoDB" id="9798651at2"/>
<dbReference type="Proteomes" id="UP000001411">
    <property type="component" value="Chromosome"/>
</dbReference>
<dbReference type="GO" id="GO:0003677">
    <property type="term" value="F:DNA binding"/>
    <property type="evidence" value="ECO:0007669"/>
    <property type="project" value="UniProtKB-KW"/>
</dbReference>
<dbReference type="GO" id="GO:0003700">
    <property type="term" value="F:DNA-binding transcription factor activity"/>
    <property type="evidence" value="ECO:0007669"/>
    <property type="project" value="InterPro"/>
</dbReference>
<dbReference type="GO" id="GO:0005988">
    <property type="term" value="P:lactose metabolic process"/>
    <property type="evidence" value="ECO:0007669"/>
    <property type="project" value="UniProtKB-KW"/>
</dbReference>
<dbReference type="Gene3D" id="3.40.50.1360">
    <property type="match status" value="1"/>
</dbReference>
<dbReference type="Gene3D" id="1.10.10.10">
    <property type="entry name" value="Winged helix-like DNA-binding domain superfamily/Winged helix DNA-binding domain"/>
    <property type="match status" value="1"/>
</dbReference>
<dbReference type="InterPro" id="IPR050313">
    <property type="entry name" value="Carb_Metab_HTH_regulators"/>
</dbReference>
<dbReference type="InterPro" id="IPR014036">
    <property type="entry name" value="DeoR-like_C"/>
</dbReference>
<dbReference type="InterPro" id="IPR001034">
    <property type="entry name" value="DeoR_HTH"/>
</dbReference>
<dbReference type="InterPro" id="IPR037171">
    <property type="entry name" value="NagB/RpiA_transferase-like"/>
</dbReference>
<dbReference type="InterPro" id="IPR018356">
    <property type="entry name" value="Tscrpt_reg_HTH_DeoR_CS"/>
</dbReference>
<dbReference type="InterPro" id="IPR036388">
    <property type="entry name" value="WH-like_DNA-bd_sf"/>
</dbReference>
<dbReference type="InterPro" id="IPR036390">
    <property type="entry name" value="WH_DNA-bd_sf"/>
</dbReference>
<dbReference type="PANTHER" id="PTHR30363:SF4">
    <property type="entry name" value="GLYCEROL-3-PHOSPHATE REGULON REPRESSOR"/>
    <property type="match status" value="1"/>
</dbReference>
<dbReference type="PANTHER" id="PTHR30363">
    <property type="entry name" value="HTH-TYPE TRANSCRIPTIONAL REGULATOR SRLR-RELATED"/>
    <property type="match status" value="1"/>
</dbReference>
<dbReference type="Pfam" id="PF00455">
    <property type="entry name" value="DeoRC"/>
    <property type="match status" value="1"/>
</dbReference>
<dbReference type="Pfam" id="PF08220">
    <property type="entry name" value="HTH_DeoR"/>
    <property type="match status" value="1"/>
</dbReference>
<dbReference type="PRINTS" id="PR00037">
    <property type="entry name" value="HTHLACR"/>
</dbReference>
<dbReference type="SMART" id="SM01134">
    <property type="entry name" value="DeoRC"/>
    <property type="match status" value="1"/>
</dbReference>
<dbReference type="SMART" id="SM00420">
    <property type="entry name" value="HTH_DEOR"/>
    <property type="match status" value="1"/>
</dbReference>
<dbReference type="SUPFAM" id="SSF100950">
    <property type="entry name" value="NagB/RpiA/CoA transferase-like"/>
    <property type="match status" value="1"/>
</dbReference>
<dbReference type="SUPFAM" id="SSF46785">
    <property type="entry name" value="Winged helix' DNA-binding domain"/>
    <property type="match status" value="1"/>
</dbReference>
<dbReference type="PROSITE" id="PS00894">
    <property type="entry name" value="HTH_DEOR_1"/>
    <property type="match status" value="1"/>
</dbReference>
<dbReference type="PROSITE" id="PS51000">
    <property type="entry name" value="HTH_DEOR_2"/>
    <property type="match status" value="1"/>
</dbReference>
<gene>
    <name type="primary">lacR</name>
    <name type="ordered locus">SE_1788</name>
</gene>
<protein>
    <recommendedName>
        <fullName>Lactose phosphotransferase system repressor</fullName>
    </recommendedName>
</protein>
<proteinExistence type="inferred from homology"/>
<name>LACR_STAES</name>
<organism>
    <name type="scientific">Staphylococcus epidermidis (strain ATCC 12228 / FDA PCI 1200)</name>
    <dbReference type="NCBI Taxonomy" id="176280"/>
    <lineage>
        <taxon>Bacteria</taxon>
        <taxon>Bacillati</taxon>
        <taxon>Bacillota</taxon>
        <taxon>Bacilli</taxon>
        <taxon>Bacillales</taxon>
        <taxon>Staphylococcaceae</taxon>
        <taxon>Staphylococcus</taxon>
    </lineage>
</organism>
<accession>Q8CRJ1</accession>
<comment type="function">
    <text evidence="1">Repressor of the lactose catabolism operon. Galactose-6-phosphate is the inducer (By similarity).</text>
</comment>
<evidence type="ECO:0000250" key="1"/>
<evidence type="ECO:0000255" key="2">
    <source>
        <dbReference type="PROSITE-ProRule" id="PRU00349"/>
    </source>
</evidence>
<feature type="chain" id="PRO_0000050264" description="Lactose phosphotransferase system repressor">
    <location>
        <begin position="1"/>
        <end position="251"/>
    </location>
</feature>
<feature type="domain" description="HTH deoR-type" evidence="2">
    <location>
        <begin position="3"/>
        <end position="58"/>
    </location>
</feature>
<feature type="DNA-binding region" description="H-T-H motif" evidence="2">
    <location>
        <begin position="20"/>
        <end position="39"/>
    </location>
</feature>
<reference key="1">
    <citation type="journal article" date="2003" name="Mol. Microbiol.">
        <title>Genome-based analysis of virulence genes in a non-biofilm-forming Staphylococcus epidermidis strain (ATCC 12228).</title>
        <authorList>
            <person name="Zhang Y.-Q."/>
            <person name="Ren S.-X."/>
            <person name="Li H.-L."/>
            <person name="Wang Y.-X."/>
            <person name="Fu G."/>
            <person name="Yang J."/>
            <person name="Qin Z.-Q."/>
            <person name="Miao Y.-G."/>
            <person name="Wang W.-Y."/>
            <person name="Chen R.-S."/>
            <person name="Shen Y."/>
            <person name="Chen Z."/>
            <person name="Yuan Z.-H."/>
            <person name="Zhao G.-P."/>
            <person name="Qu D."/>
            <person name="Danchin A."/>
            <person name="Wen Y.-M."/>
        </authorList>
    </citation>
    <scope>NUCLEOTIDE SEQUENCE [LARGE SCALE GENOMIC DNA]</scope>
    <source>
        <strain>ATCC 12228 / FDA PCI 1200</strain>
    </source>
</reference>